<comment type="function">
    <text evidence="1">Transfers and isomerizes the ribose moiety from AdoMet to the 7-aminomethyl group of 7-deazaguanine (preQ1-tRNA) to give epoxyqueuosine (oQ-tRNA).</text>
</comment>
<comment type="catalytic activity">
    <reaction evidence="1">
        <text>7-aminomethyl-7-carbaguanosine(34) in tRNA + S-adenosyl-L-methionine = epoxyqueuosine(34) in tRNA + adenine + L-methionine + 2 H(+)</text>
        <dbReference type="Rhea" id="RHEA:32155"/>
        <dbReference type="Rhea" id="RHEA-COMP:10342"/>
        <dbReference type="Rhea" id="RHEA-COMP:18582"/>
        <dbReference type="ChEBI" id="CHEBI:15378"/>
        <dbReference type="ChEBI" id="CHEBI:16708"/>
        <dbReference type="ChEBI" id="CHEBI:57844"/>
        <dbReference type="ChEBI" id="CHEBI:59789"/>
        <dbReference type="ChEBI" id="CHEBI:82833"/>
        <dbReference type="ChEBI" id="CHEBI:194443"/>
        <dbReference type="EC" id="2.4.99.17"/>
    </reaction>
</comment>
<comment type="pathway">
    <text evidence="1">tRNA modification; tRNA-queuosine biosynthesis.</text>
</comment>
<comment type="subunit">
    <text evidence="1">Monomer.</text>
</comment>
<comment type="subcellular location">
    <subcellularLocation>
        <location evidence="1">Cytoplasm</location>
    </subcellularLocation>
</comment>
<comment type="similarity">
    <text evidence="1">Belongs to the QueA family.</text>
</comment>
<comment type="sequence caution" evidence="2">
    <conflict type="erroneous initiation">
        <sequence resource="EMBL-CDS" id="AAW61190"/>
    </conflict>
</comment>
<protein>
    <recommendedName>
        <fullName evidence="1">S-adenosylmethionine:tRNA ribosyltransferase-isomerase</fullName>
        <ecNumber evidence="1">2.4.99.17</ecNumber>
    </recommendedName>
    <alternativeName>
        <fullName evidence="1">Queuosine biosynthesis protein QueA</fullName>
    </alternativeName>
</protein>
<evidence type="ECO:0000255" key="1">
    <source>
        <dbReference type="HAMAP-Rule" id="MF_00113"/>
    </source>
</evidence>
<evidence type="ECO:0000305" key="2"/>
<accession>Q5FR06</accession>
<gene>
    <name evidence="1" type="primary">queA</name>
    <name type="ordered locus">GOX1440</name>
</gene>
<proteinExistence type="inferred from homology"/>
<sequence length="347" mass="38030">MTDDLAPFDFELPRDHIATEPARPRDSATLLHVRPGLPPDPHVIRDLPDFLREGDLLIANNTAVIRAQLAATRGEAKIGLTLDRILANGSWHALARNSRKLKPQDILHFGDDPVTATVIENEGDGAVSIRFSVEGDEFDAFLERVGALALPPYIERPFGPTKQDDADYRTIFSQYRGAVAAPTAGLHFTPEVLAALDAKGIQRRTLTLHVGAGTFLPVRSTIAEHKMHAEWGEIDAETAAAINETRARGGRIVAVGTTSLRLLESAAREDGTVAPWRGETSIFIKPGYRFKAVDVLMTNFHLPRSTLFMLVCAFSGTETMREAYAYAIANGLRFYSYGDACLLERAP</sequence>
<feature type="chain" id="PRO_0000231341" description="S-adenosylmethionine:tRNA ribosyltransferase-isomerase">
    <location>
        <begin position="1"/>
        <end position="347"/>
    </location>
</feature>
<keyword id="KW-0963">Cytoplasm</keyword>
<keyword id="KW-0671">Queuosine biosynthesis</keyword>
<keyword id="KW-1185">Reference proteome</keyword>
<keyword id="KW-0949">S-adenosyl-L-methionine</keyword>
<keyword id="KW-0808">Transferase</keyword>
<dbReference type="EC" id="2.4.99.17" evidence="1"/>
<dbReference type="EMBL" id="CP000009">
    <property type="protein sequence ID" value="AAW61190.1"/>
    <property type="status" value="ALT_INIT"/>
    <property type="molecule type" value="Genomic_DNA"/>
</dbReference>
<dbReference type="RefSeq" id="WP_024717160.1">
    <property type="nucleotide sequence ID" value="NC_006677.1"/>
</dbReference>
<dbReference type="SMR" id="Q5FR06"/>
<dbReference type="STRING" id="290633.GOX1440"/>
<dbReference type="KEGG" id="gox:GOX1440"/>
<dbReference type="eggNOG" id="COG0809">
    <property type="taxonomic scope" value="Bacteria"/>
</dbReference>
<dbReference type="HOGENOM" id="CLU_039110_1_0_5"/>
<dbReference type="UniPathway" id="UPA00392"/>
<dbReference type="Proteomes" id="UP000006375">
    <property type="component" value="Chromosome"/>
</dbReference>
<dbReference type="GO" id="GO:0005737">
    <property type="term" value="C:cytoplasm"/>
    <property type="evidence" value="ECO:0007669"/>
    <property type="project" value="UniProtKB-SubCell"/>
</dbReference>
<dbReference type="GO" id="GO:0051075">
    <property type="term" value="F:S-adenosylmethionine:tRNA ribosyltransferase-isomerase activity"/>
    <property type="evidence" value="ECO:0007669"/>
    <property type="project" value="UniProtKB-EC"/>
</dbReference>
<dbReference type="GO" id="GO:0008616">
    <property type="term" value="P:queuosine biosynthetic process"/>
    <property type="evidence" value="ECO:0007669"/>
    <property type="project" value="UniProtKB-UniRule"/>
</dbReference>
<dbReference type="GO" id="GO:0002099">
    <property type="term" value="P:tRNA wobble guanine modification"/>
    <property type="evidence" value="ECO:0007669"/>
    <property type="project" value="TreeGrafter"/>
</dbReference>
<dbReference type="FunFam" id="3.40.1780.10:FF:000001">
    <property type="entry name" value="S-adenosylmethionine:tRNA ribosyltransferase-isomerase"/>
    <property type="match status" value="1"/>
</dbReference>
<dbReference type="Gene3D" id="2.40.10.240">
    <property type="entry name" value="QueA-like"/>
    <property type="match status" value="1"/>
</dbReference>
<dbReference type="Gene3D" id="3.40.1780.10">
    <property type="entry name" value="QueA-like"/>
    <property type="match status" value="1"/>
</dbReference>
<dbReference type="HAMAP" id="MF_00113">
    <property type="entry name" value="QueA"/>
    <property type="match status" value="1"/>
</dbReference>
<dbReference type="InterPro" id="IPR003699">
    <property type="entry name" value="QueA"/>
</dbReference>
<dbReference type="InterPro" id="IPR042118">
    <property type="entry name" value="QueA_dom1"/>
</dbReference>
<dbReference type="InterPro" id="IPR042119">
    <property type="entry name" value="QueA_dom2"/>
</dbReference>
<dbReference type="InterPro" id="IPR036100">
    <property type="entry name" value="QueA_sf"/>
</dbReference>
<dbReference type="NCBIfam" id="NF001140">
    <property type="entry name" value="PRK00147.1"/>
    <property type="match status" value="1"/>
</dbReference>
<dbReference type="NCBIfam" id="TIGR00113">
    <property type="entry name" value="queA"/>
    <property type="match status" value="1"/>
</dbReference>
<dbReference type="PANTHER" id="PTHR30307">
    <property type="entry name" value="S-ADENOSYLMETHIONINE:TRNA RIBOSYLTRANSFERASE-ISOMERASE"/>
    <property type="match status" value="1"/>
</dbReference>
<dbReference type="PANTHER" id="PTHR30307:SF0">
    <property type="entry name" value="S-ADENOSYLMETHIONINE:TRNA RIBOSYLTRANSFERASE-ISOMERASE"/>
    <property type="match status" value="1"/>
</dbReference>
<dbReference type="Pfam" id="PF02547">
    <property type="entry name" value="Queuosine_synth"/>
    <property type="match status" value="1"/>
</dbReference>
<dbReference type="SUPFAM" id="SSF111337">
    <property type="entry name" value="QueA-like"/>
    <property type="match status" value="1"/>
</dbReference>
<reference key="1">
    <citation type="journal article" date="2005" name="Nat. Biotechnol.">
        <title>Complete genome sequence of the acetic acid bacterium Gluconobacter oxydans.</title>
        <authorList>
            <person name="Prust C."/>
            <person name="Hoffmeister M."/>
            <person name="Liesegang H."/>
            <person name="Wiezer A."/>
            <person name="Fricke W.F."/>
            <person name="Ehrenreich A."/>
            <person name="Gottschalk G."/>
            <person name="Deppenmeier U."/>
        </authorList>
    </citation>
    <scope>NUCLEOTIDE SEQUENCE [LARGE SCALE GENOMIC DNA]</scope>
    <source>
        <strain>621H</strain>
    </source>
</reference>
<organism>
    <name type="scientific">Gluconobacter oxydans (strain 621H)</name>
    <name type="common">Gluconobacter suboxydans</name>
    <dbReference type="NCBI Taxonomy" id="290633"/>
    <lineage>
        <taxon>Bacteria</taxon>
        <taxon>Pseudomonadati</taxon>
        <taxon>Pseudomonadota</taxon>
        <taxon>Alphaproteobacteria</taxon>
        <taxon>Acetobacterales</taxon>
        <taxon>Acetobacteraceae</taxon>
        <taxon>Gluconobacter</taxon>
    </lineage>
</organism>
<name>QUEA_GLUOX</name>